<evidence type="ECO:0000255" key="1">
    <source>
        <dbReference type="HAMAP-Rule" id="MF_00503"/>
    </source>
</evidence>
<evidence type="ECO:0000256" key="2">
    <source>
        <dbReference type="SAM" id="MobiDB-lite"/>
    </source>
</evidence>
<evidence type="ECO:0000305" key="3"/>
<proteinExistence type="inferred from homology"/>
<name>RL9_STACT</name>
<accession>B9DPY3</accession>
<protein>
    <recommendedName>
        <fullName evidence="1">Large ribosomal subunit protein bL9</fullName>
    </recommendedName>
    <alternativeName>
        <fullName evidence="3">50S ribosomal protein L9</fullName>
    </alternativeName>
</protein>
<feature type="chain" id="PRO_1000196264" description="Large ribosomal subunit protein bL9">
    <location>
        <begin position="1"/>
        <end position="148"/>
    </location>
</feature>
<feature type="region of interest" description="Disordered" evidence="2">
    <location>
        <begin position="46"/>
        <end position="65"/>
    </location>
</feature>
<feature type="compositionally biased region" description="Basic and acidic residues" evidence="2">
    <location>
        <begin position="52"/>
        <end position="65"/>
    </location>
</feature>
<reference key="1">
    <citation type="journal article" date="2009" name="Appl. Environ. Microbiol.">
        <title>Genome analysis of the meat starter culture bacterium Staphylococcus carnosus TM300.</title>
        <authorList>
            <person name="Rosenstein R."/>
            <person name="Nerz C."/>
            <person name="Biswas L."/>
            <person name="Resch A."/>
            <person name="Raddatz G."/>
            <person name="Schuster S.C."/>
            <person name="Goetz F."/>
        </authorList>
    </citation>
    <scope>NUCLEOTIDE SEQUENCE [LARGE SCALE GENOMIC DNA]</scope>
    <source>
        <strain>TM300</strain>
    </source>
</reference>
<sequence>MKVIFTQDVKGKGKKGEVKDVPVGYANNFLFKKNVAVEATPGNLKQLQQQNKHAEQEREQEIEDAKALKKKLEDIEVEVTAKSGEGGKLFGSVSAKQIAQALQKQHDIKIDKRKMDLPNGIHALGYTNVPVKLDKEVDGTIRVHTVEQ</sequence>
<dbReference type="EMBL" id="AM295250">
    <property type="protein sequence ID" value="CAL29364.1"/>
    <property type="molecule type" value="Genomic_DNA"/>
</dbReference>
<dbReference type="RefSeq" id="WP_015901699.1">
    <property type="nucleotide sequence ID" value="NC_012121.1"/>
</dbReference>
<dbReference type="SMR" id="B9DPY3"/>
<dbReference type="KEGG" id="sca:SCA_2461"/>
<dbReference type="eggNOG" id="COG0359">
    <property type="taxonomic scope" value="Bacteria"/>
</dbReference>
<dbReference type="HOGENOM" id="CLU_078938_3_2_9"/>
<dbReference type="OrthoDB" id="9788336at2"/>
<dbReference type="BioCyc" id="SCAR396513:SCA_RS12365-MONOMER"/>
<dbReference type="Proteomes" id="UP000000444">
    <property type="component" value="Chromosome"/>
</dbReference>
<dbReference type="GO" id="GO:1990904">
    <property type="term" value="C:ribonucleoprotein complex"/>
    <property type="evidence" value="ECO:0007669"/>
    <property type="project" value="UniProtKB-KW"/>
</dbReference>
<dbReference type="GO" id="GO:0005840">
    <property type="term" value="C:ribosome"/>
    <property type="evidence" value="ECO:0007669"/>
    <property type="project" value="UniProtKB-KW"/>
</dbReference>
<dbReference type="GO" id="GO:0019843">
    <property type="term" value="F:rRNA binding"/>
    <property type="evidence" value="ECO:0007669"/>
    <property type="project" value="UniProtKB-UniRule"/>
</dbReference>
<dbReference type="GO" id="GO:0003735">
    <property type="term" value="F:structural constituent of ribosome"/>
    <property type="evidence" value="ECO:0007669"/>
    <property type="project" value="InterPro"/>
</dbReference>
<dbReference type="GO" id="GO:0006412">
    <property type="term" value="P:translation"/>
    <property type="evidence" value="ECO:0007669"/>
    <property type="project" value="UniProtKB-UniRule"/>
</dbReference>
<dbReference type="FunFam" id="3.10.430.100:FF:000002">
    <property type="entry name" value="50S ribosomal protein L9"/>
    <property type="match status" value="1"/>
</dbReference>
<dbReference type="FunFam" id="3.40.5.10:FF:000002">
    <property type="entry name" value="50S ribosomal protein L9"/>
    <property type="match status" value="1"/>
</dbReference>
<dbReference type="Gene3D" id="3.10.430.100">
    <property type="entry name" value="Ribosomal protein L9, C-terminal domain"/>
    <property type="match status" value="1"/>
</dbReference>
<dbReference type="Gene3D" id="3.40.5.10">
    <property type="entry name" value="Ribosomal protein L9, N-terminal domain"/>
    <property type="match status" value="1"/>
</dbReference>
<dbReference type="HAMAP" id="MF_00503">
    <property type="entry name" value="Ribosomal_bL9"/>
    <property type="match status" value="1"/>
</dbReference>
<dbReference type="InterPro" id="IPR000244">
    <property type="entry name" value="Ribosomal_bL9"/>
</dbReference>
<dbReference type="InterPro" id="IPR009027">
    <property type="entry name" value="Ribosomal_bL9/RNase_H1_N"/>
</dbReference>
<dbReference type="InterPro" id="IPR020594">
    <property type="entry name" value="Ribosomal_bL9_bac/chp"/>
</dbReference>
<dbReference type="InterPro" id="IPR020069">
    <property type="entry name" value="Ribosomal_bL9_C"/>
</dbReference>
<dbReference type="InterPro" id="IPR036791">
    <property type="entry name" value="Ribosomal_bL9_C_sf"/>
</dbReference>
<dbReference type="InterPro" id="IPR020070">
    <property type="entry name" value="Ribosomal_bL9_N"/>
</dbReference>
<dbReference type="InterPro" id="IPR036935">
    <property type="entry name" value="Ribosomal_bL9_N_sf"/>
</dbReference>
<dbReference type="NCBIfam" id="TIGR00158">
    <property type="entry name" value="L9"/>
    <property type="match status" value="1"/>
</dbReference>
<dbReference type="PANTHER" id="PTHR21368">
    <property type="entry name" value="50S RIBOSOMAL PROTEIN L9"/>
    <property type="match status" value="1"/>
</dbReference>
<dbReference type="Pfam" id="PF03948">
    <property type="entry name" value="Ribosomal_L9_C"/>
    <property type="match status" value="1"/>
</dbReference>
<dbReference type="Pfam" id="PF01281">
    <property type="entry name" value="Ribosomal_L9_N"/>
    <property type="match status" value="1"/>
</dbReference>
<dbReference type="SUPFAM" id="SSF55658">
    <property type="entry name" value="L9 N-domain-like"/>
    <property type="match status" value="1"/>
</dbReference>
<dbReference type="SUPFAM" id="SSF55653">
    <property type="entry name" value="Ribosomal protein L9 C-domain"/>
    <property type="match status" value="1"/>
</dbReference>
<dbReference type="PROSITE" id="PS00651">
    <property type="entry name" value="RIBOSOMAL_L9"/>
    <property type="match status" value="1"/>
</dbReference>
<organism>
    <name type="scientific">Staphylococcus carnosus (strain TM300)</name>
    <dbReference type="NCBI Taxonomy" id="396513"/>
    <lineage>
        <taxon>Bacteria</taxon>
        <taxon>Bacillati</taxon>
        <taxon>Bacillota</taxon>
        <taxon>Bacilli</taxon>
        <taxon>Bacillales</taxon>
        <taxon>Staphylococcaceae</taxon>
        <taxon>Staphylococcus</taxon>
    </lineage>
</organism>
<keyword id="KW-1185">Reference proteome</keyword>
<keyword id="KW-0687">Ribonucleoprotein</keyword>
<keyword id="KW-0689">Ribosomal protein</keyword>
<keyword id="KW-0694">RNA-binding</keyword>
<keyword id="KW-0699">rRNA-binding</keyword>
<comment type="function">
    <text evidence="1">Binds to the 23S rRNA.</text>
</comment>
<comment type="similarity">
    <text evidence="1">Belongs to the bacterial ribosomal protein bL9 family.</text>
</comment>
<gene>
    <name evidence="1" type="primary">rplI</name>
    <name type="ordered locus">Sca_2461</name>
</gene>